<proteinExistence type="inferred from homology"/>
<dbReference type="EMBL" id="CP000033">
    <property type="protein sequence ID" value="AAV43109.1"/>
    <property type="molecule type" value="Genomic_DNA"/>
</dbReference>
<dbReference type="RefSeq" id="WP_003547851.1">
    <property type="nucleotide sequence ID" value="NC_006814.3"/>
</dbReference>
<dbReference type="RefSeq" id="YP_194140.1">
    <property type="nucleotide sequence ID" value="NC_006814.3"/>
</dbReference>
<dbReference type="SMR" id="Q5FJL5"/>
<dbReference type="STRING" id="272621.LBA1279"/>
<dbReference type="KEGG" id="lac:LBA1279"/>
<dbReference type="PATRIC" id="fig|272621.13.peg.1211"/>
<dbReference type="eggNOG" id="COG4224">
    <property type="taxonomic scope" value="Bacteria"/>
</dbReference>
<dbReference type="HOGENOM" id="CLU_173137_0_1_9"/>
<dbReference type="OrthoDB" id="390105at2"/>
<dbReference type="BioCyc" id="LACI272621:G1G49-1259-MONOMER"/>
<dbReference type="Proteomes" id="UP000006381">
    <property type="component" value="Chromosome"/>
</dbReference>
<dbReference type="GO" id="GO:0005737">
    <property type="term" value="C:cytoplasm"/>
    <property type="evidence" value="ECO:0007669"/>
    <property type="project" value="UniProtKB-SubCell"/>
</dbReference>
<dbReference type="Gene3D" id="1.10.287.540">
    <property type="entry name" value="Helix hairpin bin"/>
    <property type="match status" value="1"/>
</dbReference>
<dbReference type="HAMAP" id="MF_01103">
    <property type="entry name" value="UPF0291"/>
    <property type="match status" value="1"/>
</dbReference>
<dbReference type="InterPro" id="IPR009242">
    <property type="entry name" value="DUF896"/>
</dbReference>
<dbReference type="PANTHER" id="PTHR37300">
    <property type="entry name" value="UPF0291 PROTEIN CBO2609/CLC_2481"/>
    <property type="match status" value="1"/>
</dbReference>
<dbReference type="PANTHER" id="PTHR37300:SF1">
    <property type="entry name" value="UPF0291 PROTEIN YNZC"/>
    <property type="match status" value="1"/>
</dbReference>
<dbReference type="Pfam" id="PF05979">
    <property type="entry name" value="DUF896"/>
    <property type="match status" value="1"/>
</dbReference>
<dbReference type="SUPFAM" id="SSF158221">
    <property type="entry name" value="YnzC-like"/>
    <property type="match status" value="1"/>
</dbReference>
<comment type="subcellular location">
    <subcellularLocation>
        <location evidence="1">Cytoplasm</location>
    </subcellularLocation>
</comment>
<comment type="similarity">
    <text evidence="1">Belongs to the UPF0291 family.</text>
</comment>
<keyword id="KW-0963">Cytoplasm</keyword>
<keyword id="KW-1185">Reference proteome</keyword>
<sequence>MNKDAMSKEEKKVTDRINELYHKKENEGLTPEEEEERKELHKKFLANFRAAFKQDVENMVILDKNGKEVTSEKAKQAQRKKGLRKD</sequence>
<feature type="chain" id="PRO_0000094972" description="UPF0291 protein LBA1279">
    <location>
        <begin position="1"/>
        <end position="86"/>
    </location>
</feature>
<feature type="region of interest" description="Disordered" evidence="2">
    <location>
        <begin position="1"/>
        <end position="36"/>
    </location>
</feature>
<feature type="region of interest" description="Disordered" evidence="2">
    <location>
        <begin position="65"/>
        <end position="86"/>
    </location>
</feature>
<feature type="compositionally biased region" description="Basic and acidic residues" evidence="2">
    <location>
        <begin position="1"/>
        <end position="27"/>
    </location>
</feature>
<feature type="compositionally biased region" description="Basic and acidic residues" evidence="2">
    <location>
        <begin position="65"/>
        <end position="75"/>
    </location>
</feature>
<feature type="compositionally biased region" description="Basic residues" evidence="2">
    <location>
        <begin position="76"/>
        <end position="86"/>
    </location>
</feature>
<protein>
    <recommendedName>
        <fullName evidence="1">UPF0291 protein LBA1279</fullName>
    </recommendedName>
</protein>
<reference key="1">
    <citation type="journal article" date="2005" name="Proc. Natl. Acad. Sci. U.S.A.">
        <title>Complete genome sequence of the probiotic lactic acid bacterium Lactobacillus acidophilus NCFM.</title>
        <authorList>
            <person name="Altermann E."/>
            <person name="Russell W.M."/>
            <person name="Azcarate-Peril M.A."/>
            <person name="Barrangou R."/>
            <person name="Buck B.L."/>
            <person name="McAuliffe O."/>
            <person name="Souther N."/>
            <person name="Dobson A."/>
            <person name="Duong T."/>
            <person name="Callanan M."/>
            <person name="Lick S."/>
            <person name="Hamrick A."/>
            <person name="Cano R."/>
            <person name="Klaenhammer T.R."/>
        </authorList>
    </citation>
    <scope>NUCLEOTIDE SEQUENCE [LARGE SCALE GENOMIC DNA]</scope>
    <source>
        <strain>ATCC 700396 / NCK56 / N2 / NCFM</strain>
    </source>
</reference>
<accession>Q5FJL5</accession>
<organism>
    <name type="scientific">Lactobacillus acidophilus (strain ATCC 700396 / NCK56 / N2 / NCFM)</name>
    <dbReference type="NCBI Taxonomy" id="272621"/>
    <lineage>
        <taxon>Bacteria</taxon>
        <taxon>Bacillati</taxon>
        <taxon>Bacillota</taxon>
        <taxon>Bacilli</taxon>
        <taxon>Lactobacillales</taxon>
        <taxon>Lactobacillaceae</taxon>
        <taxon>Lactobacillus</taxon>
    </lineage>
</organism>
<evidence type="ECO:0000255" key="1">
    <source>
        <dbReference type="HAMAP-Rule" id="MF_01103"/>
    </source>
</evidence>
<evidence type="ECO:0000256" key="2">
    <source>
        <dbReference type="SAM" id="MobiDB-lite"/>
    </source>
</evidence>
<gene>
    <name type="ordered locus">LBA1279</name>
</gene>
<name>Y1279_LACAC</name>